<keyword id="KW-0961">Cell wall biogenesis/degradation</keyword>
<keyword id="KW-0548">Nucleotidyltransferase</keyword>
<keyword id="KW-0777">Teichoic acid biosynthesis</keyword>
<keyword id="KW-0808">Transferase</keyword>
<protein>
    <recommendedName>
        <fullName evidence="1">Ribitol-5-phosphate cytidylyltransferase 1</fullName>
        <ecNumber evidence="1">2.7.7.40</ecNumber>
    </recommendedName>
</protein>
<feature type="chain" id="PRO_0000075618" description="Ribitol-5-phosphate cytidylyltransferase 1">
    <location>
        <begin position="1"/>
        <end position="238"/>
    </location>
</feature>
<feature type="binding site" evidence="1">
    <location>
        <begin position="7"/>
        <end position="10"/>
    </location>
    <ligand>
        <name>CTP</name>
        <dbReference type="ChEBI" id="CHEBI:37563"/>
    </ligand>
</feature>
<feature type="binding site" evidence="1">
    <location>
        <begin position="81"/>
        <end position="87"/>
    </location>
    <ligand>
        <name>CTP</name>
        <dbReference type="ChEBI" id="CHEBI:37563"/>
    </ligand>
</feature>
<feature type="site" description="Transition state stabilizer" evidence="1">
    <location>
        <position position="14"/>
    </location>
</feature>
<feature type="site" description="Transition state stabilizer" evidence="1">
    <location>
        <position position="22"/>
    </location>
</feature>
<feature type="site" description="Positions ribitol 5-phosphate for the nucleophilic attack" evidence="1">
    <location>
        <position position="160"/>
    </location>
</feature>
<feature type="site" description="Positions ribitol 5-phosphate for the nucleophilic attack" evidence="1">
    <location>
        <position position="217"/>
    </location>
</feature>
<accession>Q7A7V0</accession>
<gene>
    <name evidence="1" type="primary">tarI1</name>
    <name type="ordered locus">SA0245</name>
</gene>
<evidence type="ECO:0000255" key="1">
    <source>
        <dbReference type="HAMAP-Rule" id="MF_02068"/>
    </source>
</evidence>
<name>TARI1_STAAN</name>
<comment type="function">
    <text evidence="1">Catalyzes the transfer of the cytidylyl group of CTP to D-ribitol 5-phosphate.</text>
</comment>
<comment type="catalytic activity">
    <reaction evidence="1">
        <text>D-ribitol 5-phosphate + CTP + H(+) = CDP-L-ribitol + diphosphate</text>
        <dbReference type="Rhea" id="RHEA:12456"/>
        <dbReference type="ChEBI" id="CHEBI:15378"/>
        <dbReference type="ChEBI" id="CHEBI:33019"/>
        <dbReference type="ChEBI" id="CHEBI:37563"/>
        <dbReference type="ChEBI" id="CHEBI:57608"/>
        <dbReference type="ChEBI" id="CHEBI:57695"/>
        <dbReference type="EC" id="2.7.7.40"/>
    </reaction>
</comment>
<comment type="pathway">
    <text evidence="1">Cell wall biogenesis; poly(ribitol phosphate) teichoic acid biosynthesis.</text>
</comment>
<comment type="similarity">
    <text evidence="1">Belongs to the IspD/TarI cytidylyltransferase family. TarI subfamily.</text>
</comment>
<organism>
    <name type="scientific">Staphylococcus aureus (strain N315)</name>
    <dbReference type="NCBI Taxonomy" id="158879"/>
    <lineage>
        <taxon>Bacteria</taxon>
        <taxon>Bacillati</taxon>
        <taxon>Bacillota</taxon>
        <taxon>Bacilli</taxon>
        <taxon>Bacillales</taxon>
        <taxon>Staphylococcaceae</taxon>
        <taxon>Staphylococcus</taxon>
    </lineage>
</organism>
<reference key="1">
    <citation type="journal article" date="2001" name="Lancet">
        <title>Whole genome sequencing of meticillin-resistant Staphylococcus aureus.</title>
        <authorList>
            <person name="Kuroda M."/>
            <person name="Ohta T."/>
            <person name="Uchiyama I."/>
            <person name="Baba T."/>
            <person name="Yuzawa H."/>
            <person name="Kobayashi I."/>
            <person name="Cui L."/>
            <person name="Oguchi A."/>
            <person name="Aoki K."/>
            <person name="Nagai Y."/>
            <person name="Lian J.-Q."/>
            <person name="Ito T."/>
            <person name="Kanamori M."/>
            <person name="Matsumaru H."/>
            <person name="Maruyama A."/>
            <person name="Murakami H."/>
            <person name="Hosoyama A."/>
            <person name="Mizutani-Ui Y."/>
            <person name="Takahashi N.K."/>
            <person name="Sawano T."/>
            <person name="Inoue R."/>
            <person name="Kaito C."/>
            <person name="Sekimizu K."/>
            <person name="Hirakawa H."/>
            <person name="Kuhara S."/>
            <person name="Goto S."/>
            <person name="Yabuzaki J."/>
            <person name="Kanehisa M."/>
            <person name="Yamashita A."/>
            <person name="Oshima K."/>
            <person name="Furuya K."/>
            <person name="Yoshino C."/>
            <person name="Shiba T."/>
            <person name="Hattori M."/>
            <person name="Ogasawara N."/>
            <person name="Hayashi H."/>
            <person name="Hiramatsu K."/>
        </authorList>
    </citation>
    <scope>NUCLEOTIDE SEQUENCE [LARGE SCALE GENOMIC DNA]</scope>
    <source>
        <strain>N315</strain>
    </source>
</reference>
<reference key="2">
    <citation type="journal article" date="2005" name="J. Microbiol. Methods">
        <title>Correlation of proteomic and transcriptomic profiles of Staphylococcus aureus during the post-exponential phase of growth.</title>
        <authorList>
            <person name="Scherl A."/>
            <person name="Francois P."/>
            <person name="Bento M."/>
            <person name="Deshusses J.M."/>
            <person name="Charbonnier Y."/>
            <person name="Converset V."/>
            <person name="Huyghe A."/>
            <person name="Walter N."/>
            <person name="Hoogland C."/>
            <person name="Appel R.D."/>
            <person name="Sanchez J.-C."/>
            <person name="Zimmermann-Ivol C.G."/>
            <person name="Corthals G.L."/>
            <person name="Hochstrasser D.F."/>
            <person name="Schrenzel J."/>
        </authorList>
    </citation>
    <scope>IDENTIFICATION BY MASS SPECTROMETRY</scope>
    <source>
        <strain>N315</strain>
    </source>
</reference>
<reference key="3">
    <citation type="submission" date="2007-10" db="UniProtKB">
        <title>Shotgun proteomic analysis of total and membrane protein extracts of S. aureus strain N315.</title>
        <authorList>
            <person name="Vaezzadeh A.R."/>
            <person name="Deshusses J."/>
            <person name="Lescuyer P."/>
            <person name="Hochstrasser D.F."/>
        </authorList>
    </citation>
    <scope>IDENTIFICATION BY MASS SPECTROMETRY [LARGE SCALE ANALYSIS]</scope>
    <source>
        <strain>N315</strain>
    </source>
</reference>
<proteinExistence type="evidence at protein level"/>
<dbReference type="EC" id="2.7.7.40" evidence="1"/>
<dbReference type="EMBL" id="BA000018">
    <property type="protein sequence ID" value="BAB41469.1"/>
    <property type="molecule type" value="Genomic_DNA"/>
</dbReference>
<dbReference type="PIR" id="B89789">
    <property type="entry name" value="B89789"/>
</dbReference>
<dbReference type="RefSeq" id="WP_000872486.1">
    <property type="nucleotide sequence ID" value="NC_002745.2"/>
</dbReference>
<dbReference type="SMR" id="Q7A7V0"/>
<dbReference type="EnsemblBacteria" id="BAB41469">
    <property type="protein sequence ID" value="BAB41469"/>
    <property type="gene ID" value="BAB41469"/>
</dbReference>
<dbReference type="KEGG" id="sau:SA0245"/>
<dbReference type="HOGENOM" id="CLU_061281_2_3_9"/>
<dbReference type="UniPathway" id="UPA00790"/>
<dbReference type="GO" id="GO:0050518">
    <property type="term" value="F:2-C-methyl-D-erythritol 4-phosphate cytidylyltransferase activity"/>
    <property type="evidence" value="ECO:0007669"/>
    <property type="project" value="TreeGrafter"/>
</dbReference>
<dbReference type="GO" id="GO:0047349">
    <property type="term" value="F:D-ribitol-5-phosphate cytidylyltransferase activity"/>
    <property type="evidence" value="ECO:0007669"/>
    <property type="project" value="UniProtKB-UniRule"/>
</dbReference>
<dbReference type="GO" id="GO:0071555">
    <property type="term" value="P:cell wall organization"/>
    <property type="evidence" value="ECO:0007669"/>
    <property type="project" value="UniProtKB-KW"/>
</dbReference>
<dbReference type="GO" id="GO:0008299">
    <property type="term" value="P:isoprenoid biosynthetic process"/>
    <property type="evidence" value="ECO:0007669"/>
    <property type="project" value="InterPro"/>
</dbReference>
<dbReference type="GO" id="GO:1902012">
    <property type="term" value="P:poly(ribitol phosphate) teichoic acid biosynthetic process"/>
    <property type="evidence" value="ECO:0007669"/>
    <property type="project" value="UniProtKB-UniRule"/>
</dbReference>
<dbReference type="CDD" id="cd02516">
    <property type="entry name" value="CDP-ME_synthetase"/>
    <property type="match status" value="1"/>
</dbReference>
<dbReference type="FunFam" id="3.90.550.10:FF:000003">
    <property type="entry name" value="2-C-methyl-D-erythritol 4-phosphate cytidylyltransferase"/>
    <property type="match status" value="1"/>
</dbReference>
<dbReference type="Gene3D" id="3.90.550.10">
    <property type="entry name" value="Spore Coat Polysaccharide Biosynthesis Protein SpsA, Chain A"/>
    <property type="match status" value="1"/>
</dbReference>
<dbReference type="HAMAP" id="MF_02068">
    <property type="entry name" value="TarI"/>
    <property type="match status" value="1"/>
</dbReference>
<dbReference type="InterPro" id="IPR034683">
    <property type="entry name" value="IspD/TarI"/>
</dbReference>
<dbReference type="InterPro" id="IPR050088">
    <property type="entry name" value="IspD/TarI_cytidylyltransf_bact"/>
</dbReference>
<dbReference type="InterPro" id="IPR018294">
    <property type="entry name" value="ISPD_synthase_CS"/>
</dbReference>
<dbReference type="InterPro" id="IPR029044">
    <property type="entry name" value="Nucleotide-diphossugar_trans"/>
</dbReference>
<dbReference type="InterPro" id="IPR034709">
    <property type="entry name" value="TarI"/>
</dbReference>
<dbReference type="NCBIfam" id="NF001183">
    <property type="entry name" value="PRK00155.1-3"/>
    <property type="match status" value="1"/>
</dbReference>
<dbReference type="NCBIfam" id="NF009924">
    <property type="entry name" value="PRK13385.1"/>
    <property type="match status" value="1"/>
</dbReference>
<dbReference type="PANTHER" id="PTHR32125">
    <property type="entry name" value="2-C-METHYL-D-ERYTHRITOL 4-PHOSPHATE CYTIDYLYLTRANSFERASE, CHLOROPLASTIC"/>
    <property type="match status" value="1"/>
</dbReference>
<dbReference type="PANTHER" id="PTHR32125:SF8">
    <property type="entry name" value="RIBITOL-5-PHOSPHATE CYTIDYLYLTRANSFERASE"/>
    <property type="match status" value="1"/>
</dbReference>
<dbReference type="Pfam" id="PF01128">
    <property type="entry name" value="IspD"/>
    <property type="match status" value="1"/>
</dbReference>
<dbReference type="SUPFAM" id="SSF53448">
    <property type="entry name" value="Nucleotide-diphospho-sugar transferases"/>
    <property type="match status" value="1"/>
</dbReference>
<dbReference type="PROSITE" id="PS01295">
    <property type="entry name" value="ISPD"/>
    <property type="match status" value="1"/>
</dbReference>
<sequence>MKYAGILAGGIGSRMGNVPLPKQFLDLDNKPILIHTLEKFILINDFEKIIIATPQQWMTHTKDTLRKFKISDERIEVIQGGSDRNDTIMNIVKHIESTNGINDDDVIVTHDAVRPFLTHRIIKENIQAALEYGAVDTVIDAIDTIVTSKDNQTIDAIPVRNEMYQGQTPQSFNINLLKESYAQLSDEQKSILSDACKIIVETNKPVRLVKGELYNIKVTTPYDLKVANAIIRGGIADD</sequence>